<feature type="chain" id="PRO_0000133009" description="Uncharacterized 34.4 kDa protein in LEF3-IAP2 intergenic region">
    <location>
        <begin position="1"/>
        <end position="290"/>
    </location>
</feature>
<sequence length="290" mass="34409">MDSLANLCLKTLPYKFEPPKFLRTKYCDACRYRFLPKFSDEKFCGQCICNICNNPKNIDCPSSYISKIKPKKENKEIYITSNKFNKTCKNECNQQSNRRCLISYFTNESCKELNCCWFNKNCYMCLEYKKNLYNVNLYTIDGHCPSFKAVCFSCIKRIKTCQVCNQPLLKMYKEKQEERLKMQSLYATLADVDLKILDIYDVDNYSRKMILCAQCHIFARCFCTNTMQCFCPRQGYKCECICRRSKYFKNNVLCVKSKAACFNKMKIKRVPKWKHSVDYTFKSIYKLINV</sequence>
<proteinExistence type="predicted"/>
<name>Y070_NPVAC</name>
<dbReference type="EMBL" id="L22858">
    <property type="protein sequence ID" value="AAA66700.1"/>
    <property type="molecule type" value="Genomic_DNA"/>
</dbReference>
<dbReference type="PIR" id="G72858">
    <property type="entry name" value="G72858"/>
</dbReference>
<dbReference type="RefSeq" id="NP_054100.1">
    <property type="nucleotide sequence ID" value="NC_001623.1"/>
</dbReference>
<dbReference type="GeneID" id="1403903"/>
<dbReference type="KEGG" id="vg:1403903"/>
<dbReference type="OrthoDB" id="30663at10239"/>
<dbReference type="Proteomes" id="UP000008292">
    <property type="component" value="Segment"/>
</dbReference>
<reference key="1">
    <citation type="journal article" date="1994" name="Virology">
        <title>The complete DNA sequence of Autographa californica nuclear polyhedrosis virus.</title>
        <authorList>
            <person name="Ayres M.D."/>
            <person name="Howard S.C."/>
            <person name="Kuzio J."/>
            <person name="Lopez-Ferber M."/>
            <person name="Possee R.D."/>
        </authorList>
    </citation>
    <scope>NUCLEOTIDE SEQUENCE [LARGE SCALE GENOMIC DNA]</scope>
    <source>
        <strain>C6</strain>
    </source>
</reference>
<organismHost>
    <name type="scientific">Lepidoptera</name>
    <name type="common">butterflies and moths</name>
    <dbReference type="NCBI Taxonomy" id="7088"/>
</organismHost>
<accession>P41470</accession>
<keyword id="KW-1185">Reference proteome</keyword>
<organism>
    <name type="scientific">Autographa californica nuclear polyhedrosis virus</name>
    <name type="common">AcMNPV</name>
    <dbReference type="NCBI Taxonomy" id="46015"/>
    <lineage>
        <taxon>Viruses</taxon>
        <taxon>Viruses incertae sedis</taxon>
        <taxon>Naldaviricetes</taxon>
        <taxon>Lefavirales</taxon>
        <taxon>Baculoviridae</taxon>
        <taxon>Alphabaculovirus</taxon>
        <taxon>Alphabaculovirus aucalifornicae</taxon>
    </lineage>
</organism>
<protein>
    <recommendedName>
        <fullName>Uncharacterized 34.4 kDa protein in LEF3-IAP2 intergenic region</fullName>
    </recommendedName>
</protein>